<evidence type="ECO:0000250" key="1">
    <source>
        <dbReference type="UniProtKB" id="P08692"/>
    </source>
</evidence>
<evidence type="ECO:0000255" key="2">
    <source>
        <dbReference type="PROSITE-ProRule" id="PRU01282"/>
    </source>
</evidence>
<evidence type="ECO:0000305" key="3"/>
<comment type="function">
    <text evidence="1">Involved in resistance to arsenate. Catalyzes the reduction of arsenate [As(V)] to arsenite [As(III)].</text>
</comment>
<comment type="catalytic activity">
    <reaction evidence="1">
        <text>[glutaredoxin]-dithiol + arsenate + glutathione + H(+) = glutathionyl-S-S-[glutaredoxin] + arsenite + H2O</text>
        <dbReference type="Rhea" id="RHEA:22016"/>
        <dbReference type="Rhea" id="RHEA-COMP:10729"/>
        <dbReference type="Rhea" id="RHEA-COMP:17668"/>
        <dbReference type="ChEBI" id="CHEBI:15377"/>
        <dbReference type="ChEBI" id="CHEBI:15378"/>
        <dbReference type="ChEBI" id="CHEBI:29242"/>
        <dbReference type="ChEBI" id="CHEBI:29950"/>
        <dbReference type="ChEBI" id="CHEBI:48597"/>
        <dbReference type="ChEBI" id="CHEBI:57925"/>
        <dbReference type="ChEBI" id="CHEBI:146199"/>
        <dbReference type="EC" id="1.20.4.1"/>
    </reaction>
</comment>
<comment type="similarity">
    <text evidence="3">Belongs to the ArsC family.</text>
</comment>
<accession>P44589</accession>
<gene>
    <name type="primary">arsC</name>
    <name type="synonym">arsG</name>
    <name type="ordered locus">HI_0236</name>
</gene>
<name>ARSC_HAEIN</name>
<feature type="chain" id="PRO_0000162539" description="Arsenate reductase">
    <location>
        <begin position="1"/>
        <end position="116"/>
    </location>
</feature>
<feature type="active site" description="Nucleophile; cysteine thioarsenate intermediate" evidence="1 2">
    <location>
        <position position="11"/>
    </location>
</feature>
<feature type="site" description="Important for activity" evidence="1">
    <location>
        <position position="7"/>
    </location>
</feature>
<feature type="site" description="Important for activity" evidence="1">
    <location>
        <position position="60"/>
    </location>
</feature>
<feature type="site" description="Important for activity" evidence="1">
    <location>
        <position position="94"/>
    </location>
</feature>
<feature type="site" description="Important for activity" evidence="1">
    <location>
        <position position="107"/>
    </location>
</feature>
<keyword id="KW-0059">Arsenical resistance</keyword>
<keyword id="KW-0560">Oxidoreductase</keyword>
<keyword id="KW-1185">Reference proteome</keyword>
<dbReference type="EC" id="1.20.4.1" evidence="1"/>
<dbReference type="EMBL" id="L42023">
    <property type="protein sequence ID" value="AAC21906.1"/>
    <property type="molecule type" value="Genomic_DNA"/>
</dbReference>
<dbReference type="PIR" id="G64056">
    <property type="entry name" value="G64056"/>
</dbReference>
<dbReference type="RefSeq" id="NP_438407.1">
    <property type="nucleotide sequence ID" value="NC_000907.1"/>
</dbReference>
<dbReference type="SMR" id="P44589"/>
<dbReference type="STRING" id="71421.HI_0236"/>
<dbReference type="EnsemblBacteria" id="AAC21906">
    <property type="protein sequence ID" value="AAC21906"/>
    <property type="gene ID" value="HI_0236"/>
</dbReference>
<dbReference type="KEGG" id="hin:HI_0236"/>
<dbReference type="PATRIC" id="fig|71421.8.peg.251"/>
<dbReference type="eggNOG" id="COG1393">
    <property type="taxonomic scope" value="Bacteria"/>
</dbReference>
<dbReference type="HOGENOM" id="CLU_116644_0_1_6"/>
<dbReference type="OrthoDB" id="9790554at2"/>
<dbReference type="PhylomeDB" id="P44589"/>
<dbReference type="BioCyc" id="HINF71421:G1GJ1-252-MONOMER"/>
<dbReference type="Proteomes" id="UP000000579">
    <property type="component" value="Chromosome"/>
</dbReference>
<dbReference type="GO" id="GO:0008794">
    <property type="term" value="F:arsenate reductase (glutaredoxin) activity"/>
    <property type="evidence" value="ECO:0007669"/>
    <property type="project" value="UniProtKB-EC"/>
</dbReference>
<dbReference type="GO" id="GO:0046685">
    <property type="term" value="P:response to arsenic-containing substance"/>
    <property type="evidence" value="ECO:0007669"/>
    <property type="project" value="UniProtKB-KW"/>
</dbReference>
<dbReference type="CDD" id="cd03034">
    <property type="entry name" value="ArsC_ArsC"/>
    <property type="match status" value="1"/>
</dbReference>
<dbReference type="Gene3D" id="3.40.30.10">
    <property type="entry name" value="Glutaredoxin"/>
    <property type="match status" value="1"/>
</dbReference>
<dbReference type="InterPro" id="IPR006659">
    <property type="entry name" value="Arsenate_reductase"/>
</dbReference>
<dbReference type="InterPro" id="IPR006660">
    <property type="entry name" value="Arsenate_reductase-like"/>
</dbReference>
<dbReference type="InterPro" id="IPR036249">
    <property type="entry name" value="Thioredoxin-like_sf"/>
</dbReference>
<dbReference type="NCBIfam" id="TIGR00014">
    <property type="entry name" value="arsC"/>
    <property type="match status" value="1"/>
</dbReference>
<dbReference type="PANTHER" id="PTHR30041">
    <property type="entry name" value="ARSENATE REDUCTASE"/>
    <property type="match status" value="1"/>
</dbReference>
<dbReference type="PANTHER" id="PTHR30041:SF4">
    <property type="entry name" value="ARSENATE REDUCTASE"/>
    <property type="match status" value="1"/>
</dbReference>
<dbReference type="Pfam" id="PF03960">
    <property type="entry name" value="ArsC"/>
    <property type="match status" value="1"/>
</dbReference>
<dbReference type="SUPFAM" id="SSF52833">
    <property type="entry name" value="Thioredoxin-like"/>
    <property type="match status" value="1"/>
</dbReference>
<dbReference type="PROSITE" id="PS51353">
    <property type="entry name" value="ARSC"/>
    <property type="match status" value="1"/>
</dbReference>
<sequence>MSVIIYHNPHCSKSRETLALLENKGIQPIIELYLQKQYSVNELQSIAKKLGIDDVRQMMRTKDELYKSLNLDNLDLSQAELFKAISEHSALIERPIVINGDKAKIGRPPETVLEIL</sequence>
<organism>
    <name type="scientific">Haemophilus influenzae (strain ATCC 51907 / DSM 11121 / KW20 / Rd)</name>
    <dbReference type="NCBI Taxonomy" id="71421"/>
    <lineage>
        <taxon>Bacteria</taxon>
        <taxon>Pseudomonadati</taxon>
        <taxon>Pseudomonadota</taxon>
        <taxon>Gammaproteobacteria</taxon>
        <taxon>Pasteurellales</taxon>
        <taxon>Pasteurellaceae</taxon>
        <taxon>Haemophilus</taxon>
    </lineage>
</organism>
<protein>
    <recommendedName>
        <fullName>Arsenate reductase</fullName>
        <ecNumber evidence="1">1.20.4.1</ecNumber>
    </recommendedName>
</protein>
<reference key="1">
    <citation type="journal article" date="1995" name="Science">
        <title>Whole-genome random sequencing and assembly of Haemophilus influenzae Rd.</title>
        <authorList>
            <person name="Fleischmann R.D."/>
            <person name="Adams M.D."/>
            <person name="White O."/>
            <person name="Clayton R.A."/>
            <person name="Kirkness E.F."/>
            <person name="Kerlavage A.R."/>
            <person name="Bult C.J."/>
            <person name="Tomb J.-F."/>
            <person name="Dougherty B.A."/>
            <person name="Merrick J.M."/>
            <person name="McKenney K."/>
            <person name="Sutton G.G."/>
            <person name="FitzHugh W."/>
            <person name="Fields C.A."/>
            <person name="Gocayne J.D."/>
            <person name="Scott J.D."/>
            <person name="Shirley R."/>
            <person name="Liu L.-I."/>
            <person name="Glodek A."/>
            <person name="Kelley J.M."/>
            <person name="Weidman J.F."/>
            <person name="Phillips C.A."/>
            <person name="Spriggs T."/>
            <person name="Hedblom E."/>
            <person name="Cotton M.D."/>
            <person name="Utterback T.R."/>
            <person name="Hanna M.C."/>
            <person name="Nguyen D.T."/>
            <person name="Saudek D.M."/>
            <person name="Brandon R.C."/>
            <person name="Fine L.D."/>
            <person name="Fritchman J.L."/>
            <person name="Fuhrmann J.L."/>
            <person name="Geoghagen N.S.M."/>
            <person name="Gnehm C.L."/>
            <person name="McDonald L.A."/>
            <person name="Small K.V."/>
            <person name="Fraser C.M."/>
            <person name="Smith H.O."/>
            <person name="Venter J.C."/>
        </authorList>
    </citation>
    <scope>NUCLEOTIDE SEQUENCE [LARGE SCALE GENOMIC DNA]</scope>
    <source>
        <strain>ATCC 51907 / DSM 11121 / KW20 / Rd</strain>
    </source>
</reference>
<proteinExistence type="inferred from homology"/>